<protein>
    <recommendedName>
        <fullName evidence="1">Large ribosomal subunit protein bL31</fullName>
    </recommendedName>
    <alternativeName>
        <fullName evidence="2">50S ribosomal protein L31</fullName>
    </alternativeName>
</protein>
<feature type="chain" id="PRO_1000126622" description="Large ribosomal subunit protein bL31">
    <location>
        <begin position="1"/>
        <end position="70"/>
    </location>
</feature>
<feature type="binding site" evidence="1">
    <location>
        <position position="16"/>
    </location>
    <ligand>
        <name>Zn(2+)</name>
        <dbReference type="ChEBI" id="CHEBI:29105"/>
    </ligand>
</feature>
<feature type="binding site" evidence="1">
    <location>
        <position position="18"/>
    </location>
    <ligand>
        <name>Zn(2+)</name>
        <dbReference type="ChEBI" id="CHEBI:29105"/>
    </ligand>
</feature>
<feature type="binding site" evidence="1">
    <location>
        <position position="37"/>
    </location>
    <ligand>
        <name>Zn(2+)</name>
        <dbReference type="ChEBI" id="CHEBI:29105"/>
    </ligand>
</feature>
<feature type="binding site" evidence="1">
    <location>
        <position position="40"/>
    </location>
    <ligand>
        <name>Zn(2+)</name>
        <dbReference type="ChEBI" id="CHEBI:29105"/>
    </ligand>
</feature>
<feature type="modified residue" description="N6-acetyllysine" evidence="1">
    <location>
        <position position="8"/>
    </location>
</feature>
<accession>B1LNP1</accession>
<reference key="1">
    <citation type="journal article" date="2008" name="J. Bacteriol.">
        <title>Insights into the environmental resistance gene pool from the genome sequence of the multidrug-resistant environmental isolate Escherichia coli SMS-3-5.</title>
        <authorList>
            <person name="Fricke W.F."/>
            <person name="Wright M.S."/>
            <person name="Lindell A.H."/>
            <person name="Harkins D.M."/>
            <person name="Baker-Austin C."/>
            <person name="Ravel J."/>
            <person name="Stepanauskas R."/>
        </authorList>
    </citation>
    <scope>NUCLEOTIDE SEQUENCE [LARGE SCALE GENOMIC DNA]</scope>
    <source>
        <strain>SMS-3-5 / SECEC</strain>
    </source>
</reference>
<organism>
    <name type="scientific">Escherichia coli (strain SMS-3-5 / SECEC)</name>
    <dbReference type="NCBI Taxonomy" id="439855"/>
    <lineage>
        <taxon>Bacteria</taxon>
        <taxon>Pseudomonadati</taxon>
        <taxon>Pseudomonadota</taxon>
        <taxon>Gammaproteobacteria</taxon>
        <taxon>Enterobacterales</taxon>
        <taxon>Enterobacteriaceae</taxon>
        <taxon>Escherichia</taxon>
    </lineage>
</organism>
<dbReference type="EMBL" id="CP000970">
    <property type="protein sequence ID" value="ACB16411.1"/>
    <property type="molecule type" value="Genomic_DNA"/>
</dbReference>
<dbReference type="RefSeq" id="WP_000710769.1">
    <property type="nucleotide sequence ID" value="NC_010498.1"/>
</dbReference>
<dbReference type="SMR" id="B1LNP1"/>
<dbReference type="GeneID" id="93777962"/>
<dbReference type="KEGG" id="ecm:EcSMS35_4378"/>
<dbReference type="HOGENOM" id="CLU_114306_4_3_6"/>
<dbReference type="Proteomes" id="UP000007011">
    <property type="component" value="Chromosome"/>
</dbReference>
<dbReference type="GO" id="GO:1990904">
    <property type="term" value="C:ribonucleoprotein complex"/>
    <property type="evidence" value="ECO:0007669"/>
    <property type="project" value="UniProtKB-KW"/>
</dbReference>
<dbReference type="GO" id="GO:0005840">
    <property type="term" value="C:ribosome"/>
    <property type="evidence" value="ECO:0007669"/>
    <property type="project" value="UniProtKB-KW"/>
</dbReference>
<dbReference type="GO" id="GO:0046872">
    <property type="term" value="F:metal ion binding"/>
    <property type="evidence" value="ECO:0007669"/>
    <property type="project" value="UniProtKB-KW"/>
</dbReference>
<dbReference type="GO" id="GO:0019843">
    <property type="term" value="F:rRNA binding"/>
    <property type="evidence" value="ECO:0007669"/>
    <property type="project" value="UniProtKB-KW"/>
</dbReference>
<dbReference type="GO" id="GO:0003735">
    <property type="term" value="F:structural constituent of ribosome"/>
    <property type="evidence" value="ECO:0007669"/>
    <property type="project" value="InterPro"/>
</dbReference>
<dbReference type="GO" id="GO:0006412">
    <property type="term" value="P:translation"/>
    <property type="evidence" value="ECO:0007669"/>
    <property type="project" value="UniProtKB-UniRule"/>
</dbReference>
<dbReference type="FunFam" id="4.10.830.30:FF:000001">
    <property type="entry name" value="50S ribosomal protein L31"/>
    <property type="match status" value="1"/>
</dbReference>
<dbReference type="Gene3D" id="4.10.830.30">
    <property type="entry name" value="Ribosomal protein L31"/>
    <property type="match status" value="1"/>
</dbReference>
<dbReference type="HAMAP" id="MF_00501">
    <property type="entry name" value="Ribosomal_bL31_1"/>
    <property type="match status" value="1"/>
</dbReference>
<dbReference type="InterPro" id="IPR034704">
    <property type="entry name" value="Ribosomal_bL28/bL31-like_sf"/>
</dbReference>
<dbReference type="InterPro" id="IPR002150">
    <property type="entry name" value="Ribosomal_bL31"/>
</dbReference>
<dbReference type="InterPro" id="IPR027491">
    <property type="entry name" value="Ribosomal_bL31_A"/>
</dbReference>
<dbReference type="InterPro" id="IPR042105">
    <property type="entry name" value="Ribosomal_bL31_sf"/>
</dbReference>
<dbReference type="NCBIfam" id="TIGR00105">
    <property type="entry name" value="L31"/>
    <property type="match status" value="1"/>
</dbReference>
<dbReference type="NCBIfam" id="NF000612">
    <property type="entry name" value="PRK00019.1"/>
    <property type="match status" value="1"/>
</dbReference>
<dbReference type="NCBIfam" id="NF001809">
    <property type="entry name" value="PRK00528.1"/>
    <property type="match status" value="1"/>
</dbReference>
<dbReference type="PANTHER" id="PTHR33280">
    <property type="entry name" value="50S RIBOSOMAL PROTEIN L31, CHLOROPLASTIC"/>
    <property type="match status" value="1"/>
</dbReference>
<dbReference type="PANTHER" id="PTHR33280:SF6">
    <property type="entry name" value="LARGE RIBOSOMAL SUBUNIT PROTEIN BL31A"/>
    <property type="match status" value="1"/>
</dbReference>
<dbReference type="Pfam" id="PF01197">
    <property type="entry name" value="Ribosomal_L31"/>
    <property type="match status" value="1"/>
</dbReference>
<dbReference type="PRINTS" id="PR01249">
    <property type="entry name" value="RIBOSOMALL31"/>
</dbReference>
<dbReference type="SUPFAM" id="SSF143800">
    <property type="entry name" value="L28p-like"/>
    <property type="match status" value="1"/>
</dbReference>
<dbReference type="PROSITE" id="PS01143">
    <property type="entry name" value="RIBOSOMAL_L31"/>
    <property type="match status" value="1"/>
</dbReference>
<name>RL31_ECOSM</name>
<comment type="function">
    <text evidence="1">Binds the 23S rRNA.</text>
</comment>
<comment type="cofactor">
    <cofactor evidence="1">
        <name>Zn(2+)</name>
        <dbReference type="ChEBI" id="CHEBI:29105"/>
    </cofactor>
    <text evidence="1">Binds 1 zinc ion per subunit.</text>
</comment>
<comment type="subunit">
    <text evidence="1">Part of the 50S ribosomal subunit.</text>
</comment>
<comment type="similarity">
    <text evidence="1">Belongs to the bacterial ribosomal protein bL31 family. Type A subfamily.</text>
</comment>
<proteinExistence type="inferred from homology"/>
<evidence type="ECO:0000255" key="1">
    <source>
        <dbReference type="HAMAP-Rule" id="MF_00501"/>
    </source>
</evidence>
<evidence type="ECO:0000305" key="2"/>
<gene>
    <name evidence="1" type="primary">rpmE</name>
    <name type="ordered locus">EcSMS35_4378</name>
</gene>
<sequence>MKKDIHPKYEEITASCSCGNVMKIRSTVGHDLNLDVCSKCHPFFTGKQRDVATGGRVDRFNKRFNIPGSK</sequence>
<keyword id="KW-0007">Acetylation</keyword>
<keyword id="KW-0479">Metal-binding</keyword>
<keyword id="KW-0687">Ribonucleoprotein</keyword>
<keyword id="KW-0689">Ribosomal protein</keyword>
<keyword id="KW-0694">RNA-binding</keyword>
<keyword id="KW-0699">rRNA-binding</keyword>
<keyword id="KW-0862">Zinc</keyword>